<reference key="1">
    <citation type="journal article" date="1992" name="J. Bacteriol.">
        <title>Chitinases of Streptomyces olivaceoviridis and significance of processing for multiplicity.</title>
        <authorList>
            <person name="Romaguera A."/>
            <person name="Menge U."/>
            <person name="Breves R."/>
            <person name="Diekmann H."/>
        </authorList>
    </citation>
    <scope>PROTEIN SEQUENCE</scope>
    <source>
        <strain>ATCC 11238 / DSM 41433 / NCIB 8592 / QM B814</strain>
    </source>
</reference>
<comment type="function">
    <text>Able to cleave chitin oligomers from N=3 to 6.</text>
</comment>
<comment type="catalytic activity">
    <reaction>
        <text>Random endo-hydrolysis of N-acetyl-beta-D-glucosaminide (1-&gt;4)-beta-linkages in chitin and chitodextrins.</text>
        <dbReference type="EC" id="3.2.1.14"/>
    </reaction>
</comment>
<comment type="subunit">
    <text>Homodimer.</text>
</comment>
<comment type="similarity">
    <text evidence="2">Belongs to the glycosyl hydrolase 18 family. Chitinase class II subfamily.</text>
</comment>
<keyword id="KW-0119">Carbohydrate metabolism</keyword>
<keyword id="KW-0146">Chitin degradation</keyword>
<keyword id="KW-0903">Direct protein sequencing</keyword>
<keyword id="KW-0326">Glycosidase</keyword>
<keyword id="KW-0378">Hydrolase</keyword>
<keyword id="KW-0624">Polysaccharide degradation</keyword>
<evidence type="ECO:0000255" key="1">
    <source>
        <dbReference type="PROSITE-ProRule" id="PRU01258"/>
    </source>
</evidence>
<evidence type="ECO:0000305" key="2"/>
<organism>
    <name type="scientific">Streptomyces olivaceoviridis</name>
    <name type="common">Streptomyces corchorusii</name>
    <dbReference type="NCBI Taxonomy" id="1921"/>
    <lineage>
        <taxon>Bacteria</taxon>
        <taxon>Bacillati</taxon>
        <taxon>Actinomycetota</taxon>
        <taxon>Actinomycetes</taxon>
        <taxon>Kitasatosporales</taxon>
        <taxon>Streptomycetaceae</taxon>
        <taxon>Streptomyces</taxon>
    </lineage>
</organism>
<accession>P29116</accession>
<feature type="chain" id="PRO_0000077046" description="Chitinase 47 kDa">
    <location>
        <begin position="1"/>
        <end position="27" status="greater than"/>
    </location>
</feature>
<feature type="domain" description="GH18" evidence="1">
    <location>
        <begin position="3"/>
        <end position="27" status="greater than"/>
    </location>
</feature>
<feature type="non-terminal residue">
    <location>
        <position position="27"/>
    </location>
</feature>
<dbReference type="EC" id="3.2.1.14"/>
<dbReference type="PIR" id="C44908">
    <property type="entry name" value="C44908"/>
</dbReference>
<dbReference type="GO" id="GO:0008843">
    <property type="term" value="F:endochitinase activity"/>
    <property type="evidence" value="ECO:0007669"/>
    <property type="project" value="UniProtKB-EC"/>
</dbReference>
<dbReference type="GO" id="GO:0006032">
    <property type="term" value="P:chitin catabolic process"/>
    <property type="evidence" value="ECO:0007669"/>
    <property type="project" value="UniProtKB-KW"/>
</dbReference>
<dbReference type="GO" id="GO:0000272">
    <property type="term" value="P:polysaccharide catabolic process"/>
    <property type="evidence" value="ECO:0007669"/>
    <property type="project" value="UniProtKB-KW"/>
</dbReference>
<dbReference type="Gene3D" id="3.20.20.80">
    <property type="entry name" value="Glycosidases"/>
    <property type="match status" value="1"/>
</dbReference>
<dbReference type="InterPro" id="IPR001223">
    <property type="entry name" value="Glyco_hydro18_cat"/>
</dbReference>
<dbReference type="PROSITE" id="PS51910">
    <property type="entry name" value="GH18_2"/>
    <property type="match status" value="1"/>
</dbReference>
<protein>
    <recommendedName>
        <fullName>Chitinase 47 kDa</fullName>
        <ecNumber>3.2.1.14</ecNumber>
    </recommendedName>
</protein>
<name>CHI2_STROI</name>
<proteinExistence type="evidence at protein level"/>
<sequence length="27" mass="3173">AGSKVVGYFTEWGTYDRKYYVKNIEXS</sequence>